<evidence type="ECO:0000255" key="1">
    <source>
        <dbReference type="HAMAP-Rule" id="MF_01139"/>
    </source>
</evidence>
<reference key="1">
    <citation type="journal article" date="2001" name="Proc. Natl. Acad. Sci. U.S.A.">
        <title>Genome sequence of an industrial microorganism Streptomyces avermitilis: deducing the ability of producing secondary metabolites.</title>
        <authorList>
            <person name="Omura S."/>
            <person name="Ikeda H."/>
            <person name="Ishikawa J."/>
            <person name="Hanamoto A."/>
            <person name="Takahashi C."/>
            <person name="Shinose M."/>
            <person name="Takahashi Y."/>
            <person name="Horikawa H."/>
            <person name="Nakazawa H."/>
            <person name="Osonoe T."/>
            <person name="Kikuchi H."/>
            <person name="Shiba T."/>
            <person name="Sakaki Y."/>
            <person name="Hattori M."/>
        </authorList>
    </citation>
    <scope>NUCLEOTIDE SEQUENCE [LARGE SCALE GENOMIC DNA]</scope>
    <source>
        <strain>ATCC 31267 / DSM 46492 / JCM 5070 / NBRC 14893 / NCIMB 12804 / NRRL 8165 / MA-4680</strain>
    </source>
</reference>
<reference key="2">
    <citation type="journal article" date="2003" name="Nat. Biotechnol.">
        <title>Complete genome sequence and comparative analysis of the industrial microorganism Streptomyces avermitilis.</title>
        <authorList>
            <person name="Ikeda H."/>
            <person name="Ishikawa J."/>
            <person name="Hanamoto A."/>
            <person name="Shinose M."/>
            <person name="Kikuchi H."/>
            <person name="Shiba T."/>
            <person name="Sakaki Y."/>
            <person name="Hattori M."/>
            <person name="Omura S."/>
        </authorList>
    </citation>
    <scope>NUCLEOTIDE SEQUENCE [LARGE SCALE GENOMIC DNA]</scope>
    <source>
        <strain>ATCC 31267 / DSM 46492 / JCM 5070 / NBRC 14893 / NCIMB 12804 / NRRL 8165 / MA-4680</strain>
    </source>
</reference>
<sequence>MNLRDNLRRLLVRFYARRVEGHLDHDQVPKHIGVIMDGNRRWAKAAGSTTAQGHRAGADKIEEFLGWCSETDVGVVTLWLLSTDNFDRPQEELGPLLGIIEGVVRTLAADGRWRVHHVGTPDILPSQMQNALKEAEETTAHVDGILVNVAIGYGGRQEIADAVRSMLLDAHEKGTSIPDLADAVDVDLIGKHLYTGAQPDPDLVIRTSGEQRLSGFMLWQTAHSEYYFCEVFWPAFRKVDFLRALRDYAARHRRYGN</sequence>
<name>ISPT1_STRAW</name>
<gene>
    <name evidence="1" type="primary">uppS1</name>
    <name type="ordered locus">SAV_3237</name>
</gene>
<organism>
    <name type="scientific">Streptomyces avermitilis (strain ATCC 31267 / DSM 46492 / JCM 5070 / NBRC 14893 / NCIMB 12804 / NRRL 8165 / MA-4680)</name>
    <dbReference type="NCBI Taxonomy" id="227882"/>
    <lineage>
        <taxon>Bacteria</taxon>
        <taxon>Bacillati</taxon>
        <taxon>Actinomycetota</taxon>
        <taxon>Actinomycetes</taxon>
        <taxon>Kitasatosporales</taxon>
        <taxon>Streptomycetaceae</taxon>
        <taxon>Streptomyces</taxon>
    </lineage>
</organism>
<protein>
    <recommendedName>
        <fullName evidence="1">Isoprenyl transferase 1</fullName>
        <ecNumber evidence="1">2.5.1.-</ecNumber>
    </recommendedName>
</protein>
<dbReference type="EC" id="2.5.1.-" evidence="1"/>
<dbReference type="EMBL" id="BA000030">
    <property type="protein sequence ID" value="BAC70948.1"/>
    <property type="molecule type" value="Genomic_DNA"/>
</dbReference>
<dbReference type="RefSeq" id="WP_010984667.1">
    <property type="nucleotide sequence ID" value="NZ_JZJK01000090.1"/>
</dbReference>
<dbReference type="SMR" id="Q82IC1"/>
<dbReference type="GeneID" id="41540311"/>
<dbReference type="KEGG" id="sma:SAVERM_3237"/>
<dbReference type="eggNOG" id="COG0020">
    <property type="taxonomic scope" value="Bacteria"/>
</dbReference>
<dbReference type="HOGENOM" id="CLU_038505_2_0_11"/>
<dbReference type="OrthoDB" id="4191603at2"/>
<dbReference type="Proteomes" id="UP000000428">
    <property type="component" value="Chromosome"/>
</dbReference>
<dbReference type="GO" id="GO:0005886">
    <property type="term" value="C:plasma membrane"/>
    <property type="evidence" value="ECO:0007669"/>
    <property type="project" value="TreeGrafter"/>
</dbReference>
<dbReference type="GO" id="GO:0045547">
    <property type="term" value="F:ditrans,polycis-polyprenyl diphosphate synthase [(2E,6E)-farnesyl diphosphate specific] activity"/>
    <property type="evidence" value="ECO:0007669"/>
    <property type="project" value="TreeGrafter"/>
</dbReference>
<dbReference type="GO" id="GO:0000287">
    <property type="term" value="F:magnesium ion binding"/>
    <property type="evidence" value="ECO:0007669"/>
    <property type="project" value="UniProtKB-UniRule"/>
</dbReference>
<dbReference type="GO" id="GO:0033850">
    <property type="term" value="F:Z-farnesyl diphosphate synthase activity"/>
    <property type="evidence" value="ECO:0007669"/>
    <property type="project" value="TreeGrafter"/>
</dbReference>
<dbReference type="GO" id="GO:0016094">
    <property type="term" value="P:polyprenol biosynthetic process"/>
    <property type="evidence" value="ECO:0007669"/>
    <property type="project" value="TreeGrafter"/>
</dbReference>
<dbReference type="CDD" id="cd00475">
    <property type="entry name" value="Cis_IPPS"/>
    <property type="match status" value="1"/>
</dbReference>
<dbReference type="FunFam" id="3.40.1180.10:FF:000003">
    <property type="entry name" value="Isoprenyl transferase 2"/>
    <property type="match status" value="1"/>
</dbReference>
<dbReference type="Gene3D" id="3.40.1180.10">
    <property type="entry name" value="Decaprenyl diphosphate synthase-like"/>
    <property type="match status" value="1"/>
</dbReference>
<dbReference type="HAMAP" id="MF_01139">
    <property type="entry name" value="ISPT"/>
    <property type="match status" value="1"/>
</dbReference>
<dbReference type="InterPro" id="IPR001441">
    <property type="entry name" value="UPP_synth-like"/>
</dbReference>
<dbReference type="InterPro" id="IPR018520">
    <property type="entry name" value="UPP_synth-like_CS"/>
</dbReference>
<dbReference type="InterPro" id="IPR036424">
    <property type="entry name" value="UPP_synth-like_sf"/>
</dbReference>
<dbReference type="NCBIfam" id="NF011403">
    <property type="entry name" value="PRK14828.1"/>
    <property type="match status" value="1"/>
</dbReference>
<dbReference type="NCBIfam" id="TIGR00055">
    <property type="entry name" value="uppS"/>
    <property type="match status" value="1"/>
</dbReference>
<dbReference type="PANTHER" id="PTHR10291:SF43">
    <property type="entry name" value="DEHYDRODOLICHYL DIPHOSPHATE SYNTHASE COMPLEX SUBUNIT DHDDS"/>
    <property type="match status" value="1"/>
</dbReference>
<dbReference type="PANTHER" id="PTHR10291">
    <property type="entry name" value="DEHYDRODOLICHYL DIPHOSPHATE SYNTHASE FAMILY MEMBER"/>
    <property type="match status" value="1"/>
</dbReference>
<dbReference type="Pfam" id="PF01255">
    <property type="entry name" value="Prenyltransf"/>
    <property type="match status" value="1"/>
</dbReference>
<dbReference type="SUPFAM" id="SSF64005">
    <property type="entry name" value="Undecaprenyl diphosphate synthase"/>
    <property type="match status" value="1"/>
</dbReference>
<dbReference type="PROSITE" id="PS01066">
    <property type="entry name" value="UPP_SYNTHASE"/>
    <property type="match status" value="1"/>
</dbReference>
<feature type="chain" id="PRO_0000123683" description="Isoprenyl transferase 1">
    <location>
        <begin position="1"/>
        <end position="257"/>
    </location>
</feature>
<feature type="active site" evidence="1">
    <location>
        <position position="37"/>
    </location>
</feature>
<feature type="active site" description="Proton acceptor" evidence="1">
    <location>
        <position position="85"/>
    </location>
</feature>
<feature type="binding site" evidence="1">
    <location>
        <position position="37"/>
    </location>
    <ligand>
        <name>Mg(2+)</name>
        <dbReference type="ChEBI" id="CHEBI:18420"/>
    </ligand>
</feature>
<feature type="binding site" evidence="1">
    <location>
        <begin position="38"/>
        <end position="41"/>
    </location>
    <ligand>
        <name>substrate</name>
    </ligand>
</feature>
<feature type="binding site" evidence="1">
    <location>
        <position position="42"/>
    </location>
    <ligand>
        <name>substrate</name>
    </ligand>
</feature>
<feature type="binding site" evidence="1">
    <location>
        <position position="54"/>
    </location>
    <ligand>
        <name>substrate</name>
    </ligand>
</feature>
<feature type="binding site" evidence="1">
    <location>
        <begin position="82"/>
        <end position="84"/>
    </location>
    <ligand>
        <name>substrate</name>
    </ligand>
</feature>
<feature type="binding site" evidence="1">
    <location>
        <position position="86"/>
    </location>
    <ligand>
        <name>substrate</name>
    </ligand>
</feature>
<feature type="binding site" evidence="1">
    <location>
        <position position="88"/>
    </location>
    <ligand>
        <name>substrate</name>
    </ligand>
</feature>
<feature type="binding site" evidence="1">
    <location>
        <position position="206"/>
    </location>
    <ligand>
        <name>substrate</name>
    </ligand>
</feature>
<feature type="binding site" evidence="1">
    <location>
        <begin position="212"/>
        <end position="214"/>
    </location>
    <ligand>
        <name>substrate</name>
    </ligand>
</feature>
<feature type="binding site" evidence="1">
    <location>
        <position position="225"/>
    </location>
    <ligand>
        <name>Mg(2+)</name>
        <dbReference type="ChEBI" id="CHEBI:18420"/>
    </ligand>
</feature>
<keyword id="KW-0460">Magnesium</keyword>
<keyword id="KW-0479">Metal-binding</keyword>
<keyword id="KW-1185">Reference proteome</keyword>
<keyword id="KW-0808">Transferase</keyword>
<accession>Q82IC1</accession>
<proteinExistence type="inferred from homology"/>
<comment type="function">
    <text evidence="1">Catalyzes the condensation of isopentenyl diphosphate (IPP) with allylic pyrophosphates generating different type of terpenoids.</text>
</comment>
<comment type="cofactor">
    <cofactor evidence="1">
        <name>Mg(2+)</name>
        <dbReference type="ChEBI" id="CHEBI:18420"/>
    </cofactor>
    <text evidence="1">Binds 2 magnesium ions per subunit.</text>
</comment>
<comment type="subunit">
    <text evidence="1">Homodimer.</text>
</comment>
<comment type="similarity">
    <text evidence="1">Belongs to the UPP synthase family.</text>
</comment>